<organism>
    <name type="scientific">Psychrobacter arcticus (strain DSM 17307 / VKM B-2377 / 273-4)</name>
    <dbReference type="NCBI Taxonomy" id="259536"/>
    <lineage>
        <taxon>Bacteria</taxon>
        <taxon>Pseudomonadati</taxon>
        <taxon>Pseudomonadota</taxon>
        <taxon>Gammaproteobacteria</taxon>
        <taxon>Moraxellales</taxon>
        <taxon>Moraxellaceae</taxon>
        <taxon>Psychrobacter</taxon>
    </lineage>
</organism>
<comment type="function">
    <text evidence="1">Required for insertion of 4Fe-4S clusters for at least IspG.</text>
</comment>
<comment type="cofactor">
    <cofactor evidence="1">
        <name>iron-sulfur cluster</name>
        <dbReference type="ChEBI" id="CHEBI:30408"/>
    </cofactor>
    <text evidence="1">Binds 1 iron-sulfur cluster per subunit.</text>
</comment>
<comment type="subunit">
    <text evidence="1">Homodimer.</text>
</comment>
<comment type="similarity">
    <text evidence="1">Belongs to the HesB/IscA family.</text>
</comment>
<proteinExistence type="inferred from homology"/>
<gene>
    <name evidence="1" type="primary">erpA</name>
    <name type="ordered locus">Psyc_0036</name>
</gene>
<keyword id="KW-0408">Iron</keyword>
<keyword id="KW-0411">Iron-sulfur</keyword>
<keyword id="KW-0479">Metal-binding</keyword>
<keyword id="KW-1185">Reference proteome</keyword>
<dbReference type="EMBL" id="CP000082">
    <property type="protein sequence ID" value="AAZ17910.1"/>
    <property type="molecule type" value="Genomic_DNA"/>
</dbReference>
<dbReference type="RefSeq" id="WP_011279349.1">
    <property type="nucleotide sequence ID" value="NC_007204.1"/>
</dbReference>
<dbReference type="SMR" id="Q4FVP8"/>
<dbReference type="STRING" id="259536.Psyc_0036"/>
<dbReference type="KEGG" id="par:Psyc_0036"/>
<dbReference type="eggNOG" id="COG0316">
    <property type="taxonomic scope" value="Bacteria"/>
</dbReference>
<dbReference type="HOGENOM" id="CLU_069054_5_3_6"/>
<dbReference type="Proteomes" id="UP000000546">
    <property type="component" value="Chromosome"/>
</dbReference>
<dbReference type="GO" id="GO:0051537">
    <property type="term" value="F:2 iron, 2 sulfur cluster binding"/>
    <property type="evidence" value="ECO:0007669"/>
    <property type="project" value="TreeGrafter"/>
</dbReference>
<dbReference type="GO" id="GO:0051539">
    <property type="term" value="F:4 iron, 4 sulfur cluster binding"/>
    <property type="evidence" value="ECO:0007669"/>
    <property type="project" value="TreeGrafter"/>
</dbReference>
<dbReference type="GO" id="GO:0005506">
    <property type="term" value="F:iron ion binding"/>
    <property type="evidence" value="ECO:0007669"/>
    <property type="project" value="UniProtKB-UniRule"/>
</dbReference>
<dbReference type="GO" id="GO:0016226">
    <property type="term" value="P:iron-sulfur cluster assembly"/>
    <property type="evidence" value="ECO:0007669"/>
    <property type="project" value="UniProtKB-UniRule"/>
</dbReference>
<dbReference type="FunFam" id="2.60.300.12:FF:000002">
    <property type="entry name" value="Iron-sulfur cluster insertion protein ErpA"/>
    <property type="match status" value="1"/>
</dbReference>
<dbReference type="Gene3D" id="2.60.300.12">
    <property type="entry name" value="HesB-like domain"/>
    <property type="match status" value="1"/>
</dbReference>
<dbReference type="HAMAP" id="MF_01380">
    <property type="entry name" value="Fe_S_insert_ErpA"/>
    <property type="match status" value="1"/>
</dbReference>
<dbReference type="InterPro" id="IPR000361">
    <property type="entry name" value="FeS_biogenesis"/>
</dbReference>
<dbReference type="InterPro" id="IPR016092">
    <property type="entry name" value="FeS_cluster_insertion"/>
</dbReference>
<dbReference type="InterPro" id="IPR017870">
    <property type="entry name" value="FeS_cluster_insertion_CS"/>
</dbReference>
<dbReference type="InterPro" id="IPR023063">
    <property type="entry name" value="FeS_cluster_insertion_RrpA"/>
</dbReference>
<dbReference type="InterPro" id="IPR035903">
    <property type="entry name" value="HesB-like_dom_sf"/>
</dbReference>
<dbReference type="NCBIfam" id="TIGR00049">
    <property type="entry name" value="iron-sulfur cluster assembly accessory protein"/>
    <property type="match status" value="1"/>
</dbReference>
<dbReference type="NCBIfam" id="NF010147">
    <property type="entry name" value="PRK13623.1"/>
    <property type="match status" value="1"/>
</dbReference>
<dbReference type="PANTHER" id="PTHR43011">
    <property type="entry name" value="IRON-SULFUR CLUSTER ASSEMBLY 2 HOMOLOG, MITOCHONDRIAL"/>
    <property type="match status" value="1"/>
</dbReference>
<dbReference type="PANTHER" id="PTHR43011:SF1">
    <property type="entry name" value="IRON-SULFUR CLUSTER ASSEMBLY 2 HOMOLOG, MITOCHONDRIAL"/>
    <property type="match status" value="1"/>
</dbReference>
<dbReference type="Pfam" id="PF01521">
    <property type="entry name" value="Fe-S_biosyn"/>
    <property type="match status" value="1"/>
</dbReference>
<dbReference type="SUPFAM" id="SSF89360">
    <property type="entry name" value="HesB-like domain"/>
    <property type="match status" value="1"/>
</dbReference>
<dbReference type="PROSITE" id="PS01152">
    <property type="entry name" value="HESB"/>
    <property type="match status" value="1"/>
</dbReference>
<protein>
    <recommendedName>
        <fullName evidence="1">Iron-sulfur cluster insertion protein ErpA</fullName>
    </recommendedName>
</protein>
<reference key="1">
    <citation type="journal article" date="2010" name="Appl. Environ. Microbiol.">
        <title>The genome sequence of Psychrobacter arcticus 273-4, a psychroactive Siberian permafrost bacterium, reveals mechanisms for adaptation to low-temperature growth.</title>
        <authorList>
            <person name="Ayala-del-Rio H.L."/>
            <person name="Chain P.S."/>
            <person name="Grzymski J.J."/>
            <person name="Ponder M.A."/>
            <person name="Ivanova N."/>
            <person name="Bergholz P.W."/>
            <person name="Di Bartolo G."/>
            <person name="Hauser L."/>
            <person name="Land M."/>
            <person name="Bakermans C."/>
            <person name="Rodrigues D."/>
            <person name="Klappenbach J."/>
            <person name="Zarka D."/>
            <person name="Larimer F."/>
            <person name="Richardson P."/>
            <person name="Murray A."/>
            <person name="Thomashow M."/>
            <person name="Tiedje J.M."/>
        </authorList>
    </citation>
    <scope>NUCLEOTIDE SEQUENCE [LARGE SCALE GENOMIC DNA]</scope>
    <source>
        <strain>DSM 17307 / VKM B-2377 / 273-4</strain>
    </source>
</reference>
<evidence type="ECO:0000255" key="1">
    <source>
        <dbReference type="HAMAP-Rule" id="MF_01380"/>
    </source>
</evidence>
<evidence type="ECO:0000256" key="2">
    <source>
        <dbReference type="SAM" id="MobiDB-lite"/>
    </source>
</evidence>
<name>ERPA_PSYA2</name>
<feature type="chain" id="PRO_0000311533" description="Iron-sulfur cluster insertion protein ErpA">
    <location>
        <begin position="1"/>
        <end position="126"/>
    </location>
</feature>
<feature type="region of interest" description="Disordered" evidence="2">
    <location>
        <begin position="1"/>
        <end position="21"/>
    </location>
</feature>
<feature type="binding site" evidence="1">
    <location>
        <position position="54"/>
    </location>
    <ligand>
        <name>iron-sulfur cluster</name>
        <dbReference type="ChEBI" id="CHEBI:30408"/>
    </ligand>
</feature>
<feature type="binding site" evidence="1">
    <location>
        <position position="118"/>
    </location>
    <ligand>
        <name>iron-sulfur cluster</name>
        <dbReference type="ChEBI" id="CHEBI:30408"/>
    </ligand>
</feature>
<feature type="binding site" evidence="1">
    <location>
        <position position="120"/>
    </location>
    <ligand>
        <name>iron-sulfur cluster</name>
        <dbReference type="ChEBI" id="CHEBI:30408"/>
    </ligand>
</feature>
<sequence length="126" mass="13640">MNQPANQFNPSSSQPVDPTVLNLTDSAAQKVRRLREEEGDSNLMLRVYVTGGGCSGFSYGFNFANELNEDDANFDNNDVTLVVDSLSYQYLQGSTVDYTEGLEGARFIVTNPNATTTCGCGSSFSI</sequence>
<accession>Q4FVP8</accession>